<gene>
    <name type="primary">incenp</name>
    <name type="ORF">TEgg071h21.1</name>
</gene>
<sequence length="898" mass="104130">MNDAECLSHLLQVCARKTEEFVRTLDSKHMVWLLEIEEEARKMFSSDFNAEPELMPKTPSQKRRRKKRTSIVPDENRDPSGRRISRRRSSANWSNSVRRLSIRNQNKTNEDSMQEEPAQPKRMTRARAQASIMCPSVVEMALPESPSQLYQKNVQVTISEQDRRSAEQKLVGSATEESEMKTDVLPVPKIAKDTISEIVNTVVPPPVPETPAVPVTPENKSRAAAKLKIAGSSTPIEAAEMVDLTCESPRPANELANEQPLNLTNQSVTPTGSKSDRRSVRRSLVVVKPSSRRSSLASQFSLASKRESMTREAVRKSIRQSIAKKKAAMETSSASSQRSCQSSIEIIDDEITIKIRPETAPSESVSEEAHTIESPRRSLRSRTFKKIAISNLPDSEEPQRRVTRQMVAMDAEPTPETTDDAQNIRRKSYKRAVDELSDDERPSEGERSPPRKKTPSPPCPPSKIVKPPPHMKSFLHTVQKNQLLMMTPGSIGKNIMMKSFIKRNTPLKMDPKEKERQRLDALRKKEEAELQRKQKIEEGKKRKQEELKLRREERLRKVLQARERVEQLEEEKKKKIEQKFAQIDEKSEKVREDRMAEEKAKKKITAKKQEEVECRRRQEEEARKLKAKQMEEEERRHQDLLQKKREEEELERQKKIAEAKRLAEQRQAEQERERQREQQLLAEKERLRAERERIEREKALQLQRELERAAQEKEQQRREAEERKKREQQERLEQERLERLHKEQEAKRLQEEQQRKAKEQAAAASAPVMNVTVDMQNSPACESYEMTPKSYKAPSVKVNEENYGMDLNSDDSTDDESQPRKPIPAWASGNLLAQAIRQQYYKPMDVDRMYGTIDSPKLEELFYKSKPRYYKRTSSAVWHSPPLSSNRHHLAVGYGLKY</sequence>
<evidence type="ECO:0000250" key="1"/>
<evidence type="ECO:0000250" key="2">
    <source>
        <dbReference type="UniProtKB" id="O13024"/>
    </source>
</evidence>
<evidence type="ECO:0000250" key="3">
    <source>
        <dbReference type="UniProtKB" id="P53352"/>
    </source>
</evidence>
<evidence type="ECO:0000250" key="4">
    <source>
        <dbReference type="UniProtKB" id="Q9NQS7"/>
    </source>
</evidence>
<evidence type="ECO:0000256" key="5">
    <source>
        <dbReference type="SAM" id="MobiDB-lite"/>
    </source>
</evidence>
<evidence type="ECO:0000305" key="6"/>
<accession>Q0IHP2</accession>
<accession>Q28GE7</accession>
<accession>Q5XHA5</accession>
<feature type="chain" id="PRO_0000278831" description="Inner centromere protein">
    <location>
        <begin position="1"/>
        <end position="898"/>
    </location>
</feature>
<feature type="region of interest" description="Disordered" evidence="5">
    <location>
        <begin position="50"/>
        <end position="127"/>
    </location>
</feature>
<feature type="region of interest" description="Disordered" evidence="5">
    <location>
        <begin position="251"/>
        <end position="282"/>
    </location>
</feature>
<feature type="region of interest" description="Disordered" evidence="5">
    <location>
        <begin position="358"/>
        <end position="379"/>
    </location>
</feature>
<feature type="region of interest" description="Disordered" evidence="5">
    <location>
        <begin position="406"/>
        <end position="470"/>
    </location>
</feature>
<feature type="region of interest" description="SAH" evidence="3">
    <location>
        <begin position="512"/>
        <end position="730"/>
    </location>
</feature>
<feature type="region of interest" description="Disordered" evidence="5">
    <location>
        <begin position="525"/>
        <end position="548"/>
    </location>
</feature>
<feature type="region of interest" description="Disordered" evidence="5">
    <location>
        <begin position="564"/>
        <end position="677"/>
    </location>
</feature>
<feature type="region of interest" description="Disordered" evidence="5">
    <location>
        <begin position="707"/>
        <end position="770"/>
    </location>
</feature>
<feature type="region of interest" description="Disordered" evidence="5">
    <location>
        <begin position="802"/>
        <end position="824"/>
    </location>
</feature>
<feature type="region of interest" description="IN box" evidence="6">
    <location>
        <begin position="807"/>
        <end position="881"/>
    </location>
</feature>
<feature type="compositionally biased region" description="Basic residues" evidence="5">
    <location>
        <begin position="60"/>
        <end position="69"/>
    </location>
</feature>
<feature type="compositionally biased region" description="Low complexity" evidence="5">
    <location>
        <begin position="90"/>
        <end position="99"/>
    </location>
</feature>
<feature type="compositionally biased region" description="Polar residues" evidence="5">
    <location>
        <begin position="259"/>
        <end position="272"/>
    </location>
</feature>
<feature type="compositionally biased region" description="Basic and acidic residues" evidence="5">
    <location>
        <begin position="367"/>
        <end position="376"/>
    </location>
</feature>
<feature type="compositionally biased region" description="Basic and acidic residues" evidence="5">
    <location>
        <begin position="431"/>
        <end position="449"/>
    </location>
</feature>
<feature type="compositionally biased region" description="Pro residues" evidence="5">
    <location>
        <begin position="455"/>
        <end position="470"/>
    </location>
</feature>
<feature type="compositionally biased region" description="Basic and acidic residues" evidence="5">
    <location>
        <begin position="564"/>
        <end position="600"/>
    </location>
</feature>
<feature type="compositionally biased region" description="Basic and acidic residues" evidence="5">
    <location>
        <begin position="607"/>
        <end position="677"/>
    </location>
</feature>
<feature type="compositionally biased region" description="Basic and acidic residues" evidence="5">
    <location>
        <begin position="707"/>
        <end position="759"/>
    </location>
</feature>
<feature type="modified residue" description="Phosphoserine" evidence="1">
    <location>
        <position position="874"/>
    </location>
</feature>
<feature type="modified residue" description="Phosphoserine" evidence="1">
    <location>
        <position position="875"/>
    </location>
</feature>
<feature type="sequence conflict" description="In Ref. 1; AAH84167." evidence="6" ref="1">
    <original>M</original>
    <variation>I</variation>
    <location>
        <position position="133"/>
    </location>
</feature>
<feature type="sequence conflict" description="In Ref. 2; CAJ82292." evidence="6" ref="2">
    <original>K</original>
    <variation>KTE</variation>
    <location>
        <position position="512"/>
    </location>
</feature>
<name>INCE_XENTR</name>
<keyword id="KW-0131">Cell cycle</keyword>
<keyword id="KW-0132">Cell division</keyword>
<keyword id="KW-0137">Centromere</keyword>
<keyword id="KW-0158">Chromosome</keyword>
<keyword id="KW-0159">Chromosome partition</keyword>
<keyword id="KW-0963">Cytoplasm</keyword>
<keyword id="KW-0206">Cytoskeleton</keyword>
<keyword id="KW-0995">Kinetochore</keyword>
<keyword id="KW-0493">Microtubule</keyword>
<keyword id="KW-0498">Mitosis</keyword>
<keyword id="KW-0539">Nucleus</keyword>
<keyword id="KW-0597">Phosphoprotein</keyword>
<keyword id="KW-1185">Reference proteome</keyword>
<reference key="1">
    <citation type="submission" date="2006-09" db="EMBL/GenBank/DDBJ databases">
        <authorList>
            <consortium name="NIH - Xenopus Gene Collection (XGC) project"/>
        </authorList>
    </citation>
    <scope>NUCLEOTIDE SEQUENCE [LARGE SCALE MRNA]</scope>
    <source>
        <strain>N6</strain>
        <tissue>Spleen</tissue>
        <tissue>Tail bud</tissue>
    </source>
</reference>
<reference key="2">
    <citation type="submission" date="2006-10" db="EMBL/GenBank/DDBJ databases">
        <authorList>
            <consortium name="Sanger Xenopus tropicalis EST/cDNA project"/>
        </authorList>
    </citation>
    <scope>NUCLEOTIDE SEQUENCE [LARGE SCALE MRNA] OF 1-570</scope>
    <source>
        <tissue>Egg</tissue>
    </source>
</reference>
<organism>
    <name type="scientific">Xenopus tropicalis</name>
    <name type="common">Western clawed frog</name>
    <name type="synonym">Silurana tropicalis</name>
    <dbReference type="NCBI Taxonomy" id="8364"/>
    <lineage>
        <taxon>Eukaryota</taxon>
        <taxon>Metazoa</taxon>
        <taxon>Chordata</taxon>
        <taxon>Craniata</taxon>
        <taxon>Vertebrata</taxon>
        <taxon>Euteleostomi</taxon>
        <taxon>Amphibia</taxon>
        <taxon>Batrachia</taxon>
        <taxon>Anura</taxon>
        <taxon>Pipoidea</taxon>
        <taxon>Pipidae</taxon>
        <taxon>Xenopodinae</taxon>
        <taxon>Xenopus</taxon>
        <taxon>Silurana</taxon>
    </lineage>
</organism>
<comment type="function">
    <text evidence="2 3">Component of the chromosomal passenger complex (CPC), a complex that acts as a key regulator of mitosis. The CPC complex has essential functions at the centromere in ensuring correct chromosome alignment and segregation and is required for chromatin-induced microtubule stabilization and spindle assembly. Acts as a scaffold regulating CPC localization and activity. The C-terminus associates with aurkb/aurora-B, the N-terminus associated with cdca8/borealin and/or cdca9/dasra-A tethers the CPC to the inner centromere, and the microtubule binding activity within the central SAH domain directs aurkb/aurora-B toward substrates near microtubules. Activates aurkb.</text>
</comment>
<comment type="subunit">
    <text evidence="2 6">Component of the CPC at least composed of survivin/birc5, incenp, cdca8/borealin and/or cdca9/dasra-A, and aurkb/aurora-B. Interacts (via C-terminus) with aurkb (via N-terminus and kinase domain). Interacts (via N-terminus) with birc5.1, birc5.2, cdca8 and cdca9. Interacts with mtus1 (By similarity).</text>
</comment>
<comment type="subcellular location">
    <subcellularLocation>
        <location evidence="4">Nucleus</location>
    </subcellularLocation>
    <subcellularLocation>
        <location evidence="2">Chromosome</location>
    </subcellularLocation>
    <subcellularLocation>
        <location evidence="2">Chromosome</location>
        <location evidence="2">Centromere</location>
    </subcellularLocation>
    <subcellularLocation>
        <location evidence="2">Cytoplasm</location>
        <location evidence="2">Cytoskeleton</location>
        <location evidence="2">Spindle</location>
    </subcellularLocation>
    <subcellularLocation>
        <location evidence="4">Midbody</location>
    </subcellularLocation>
    <subcellularLocation>
        <location evidence="4">Chromosome</location>
        <location evidence="4">Centromere</location>
        <location evidence="4">Kinetochore</location>
    </subcellularLocation>
    <text evidence="2">Localizes on chromosome arms and inner centromeres from prophase through metaphase and then transferring to the spindle midzone and midbody from anaphase through cytokinesis. Colocalizes to the equatorial cell cortex at anaphase. Colocalizes with AURKB at mitotic chromosomes.</text>
</comment>
<comment type="domain">
    <text evidence="2">The IN box mediates interaction with aurkb/aurora-B.</text>
</comment>
<comment type="domain">
    <text evidence="3">The SAH (single alpha-helix) region is characterized by a high content of charged residues which are predicted to stabilize the alpha-helical structure by ionic bonds. It can refold after extension suggesting an in vivo force-dependent function. The isolated SAH domain is monomeric.</text>
</comment>
<comment type="similarity">
    <text evidence="6">Belongs to the INCENP family.</text>
</comment>
<comment type="caution">
    <text evidence="3">Originally predicted to contain a coiled coil domain but shown to contain a stable SAH domain instead.</text>
</comment>
<proteinExistence type="evidence at transcript level"/>
<protein>
    <recommendedName>
        <fullName>Inner centromere protein</fullName>
    </recommendedName>
</protein>
<dbReference type="EMBL" id="BC084167">
    <property type="protein sequence ID" value="AAH84167.1"/>
    <property type="status" value="ALT_TERM"/>
    <property type="molecule type" value="mRNA"/>
</dbReference>
<dbReference type="EMBL" id="BC123050">
    <property type="protein sequence ID" value="AAI23051.1"/>
    <property type="molecule type" value="mRNA"/>
</dbReference>
<dbReference type="EMBL" id="CR761418">
    <property type="protein sequence ID" value="CAJ82292.1"/>
    <property type="molecule type" value="mRNA"/>
</dbReference>
<dbReference type="RefSeq" id="NP_001121150.1">
    <property type="nucleotide sequence ID" value="NM_001127678.1"/>
</dbReference>
<dbReference type="SMR" id="Q0IHP2"/>
<dbReference type="FunCoup" id="Q0IHP2">
    <property type="interactions" value="1088"/>
</dbReference>
<dbReference type="STRING" id="8364.ENSXETP00000017085"/>
<dbReference type="PaxDb" id="8364-ENSXETP00000014718"/>
<dbReference type="DNASU" id="496453"/>
<dbReference type="GeneID" id="496453"/>
<dbReference type="KEGG" id="xtr:496453"/>
<dbReference type="AGR" id="Xenbase:XB-GENE-990398"/>
<dbReference type="CTD" id="3619"/>
<dbReference type="Xenbase" id="XB-GENE-990398">
    <property type="gene designation" value="incenp"/>
</dbReference>
<dbReference type="eggNOG" id="KOG4456">
    <property type="taxonomic scope" value="Eukaryota"/>
</dbReference>
<dbReference type="HOGENOM" id="CLU_015997_0_0_1"/>
<dbReference type="InParanoid" id="Q0IHP2"/>
<dbReference type="OrthoDB" id="6123at2759"/>
<dbReference type="Reactome" id="R-XTR-141444">
    <property type="pathway name" value="Amplification of signal from unattached kinetochores via a MAD2 inhibitory signal"/>
</dbReference>
<dbReference type="Reactome" id="R-XTR-2467813">
    <property type="pathway name" value="Separation of Sister Chromatids"/>
</dbReference>
<dbReference type="Reactome" id="R-XTR-2500257">
    <property type="pathway name" value="Resolution of Sister Chromatid Cohesion"/>
</dbReference>
<dbReference type="Reactome" id="R-XTR-4615885">
    <property type="pathway name" value="SUMOylation of DNA replication proteins"/>
</dbReference>
<dbReference type="Reactome" id="R-XTR-5663220">
    <property type="pathway name" value="RHO GTPases Activate Formins"/>
</dbReference>
<dbReference type="Reactome" id="R-XTR-68877">
    <property type="pathway name" value="Mitotic Prometaphase"/>
</dbReference>
<dbReference type="Reactome" id="R-XTR-9648025">
    <property type="pathway name" value="EML4 and NUDC in mitotic spindle formation"/>
</dbReference>
<dbReference type="Proteomes" id="UP000008143">
    <property type="component" value="Chromosome 4"/>
</dbReference>
<dbReference type="Bgee" id="ENSXETG00000006735">
    <property type="expression patterns" value="Expressed in 2-cell stage embryo and 11 other cell types or tissues"/>
</dbReference>
<dbReference type="GO" id="GO:0005694">
    <property type="term" value="C:chromosome"/>
    <property type="evidence" value="ECO:0000250"/>
    <property type="project" value="UniProtKB"/>
</dbReference>
<dbReference type="GO" id="GO:0032133">
    <property type="term" value="C:chromosome passenger complex"/>
    <property type="evidence" value="ECO:0000250"/>
    <property type="project" value="UniProtKB"/>
</dbReference>
<dbReference type="GO" id="GO:0005737">
    <property type="term" value="C:cytoplasm"/>
    <property type="evidence" value="ECO:0007669"/>
    <property type="project" value="UniProtKB-KW"/>
</dbReference>
<dbReference type="GO" id="GO:0000776">
    <property type="term" value="C:kinetochore"/>
    <property type="evidence" value="ECO:0007669"/>
    <property type="project" value="UniProtKB-KW"/>
</dbReference>
<dbReference type="GO" id="GO:0005874">
    <property type="term" value="C:microtubule"/>
    <property type="evidence" value="ECO:0007669"/>
    <property type="project" value="UniProtKB-KW"/>
</dbReference>
<dbReference type="GO" id="GO:0030496">
    <property type="term" value="C:midbody"/>
    <property type="evidence" value="ECO:0007669"/>
    <property type="project" value="UniProtKB-SubCell"/>
</dbReference>
<dbReference type="GO" id="GO:0005634">
    <property type="term" value="C:nucleus"/>
    <property type="evidence" value="ECO:0007669"/>
    <property type="project" value="UniProtKB-SubCell"/>
</dbReference>
<dbReference type="GO" id="GO:0005819">
    <property type="term" value="C:spindle"/>
    <property type="evidence" value="ECO:0007669"/>
    <property type="project" value="UniProtKB-SubCell"/>
</dbReference>
<dbReference type="GO" id="GO:0019901">
    <property type="term" value="F:protein kinase binding"/>
    <property type="evidence" value="ECO:0000250"/>
    <property type="project" value="UniProtKB"/>
</dbReference>
<dbReference type="GO" id="GO:0051301">
    <property type="term" value="P:cell division"/>
    <property type="evidence" value="ECO:0007669"/>
    <property type="project" value="UniProtKB-KW"/>
</dbReference>
<dbReference type="GO" id="GO:0051225">
    <property type="term" value="P:spindle assembly"/>
    <property type="evidence" value="ECO:0000250"/>
    <property type="project" value="UniProtKB"/>
</dbReference>
<dbReference type="FunFam" id="1.20.5.3600:FF:000001">
    <property type="entry name" value="inner centromere protein-like"/>
    <property type="match status" value="1"/>
</dbReference>
<dbReference type="Gene3D" id="1.20.5.3600">
    <property type="match status" value="1"/>
</dbReference>
<dbReference type="Gene3D" id="6.10.250.2990">
    <property type="match status" value="1"/>
</dbReference>
<dbReference type="InterPro" id="IPR022006">
    <property type="entry name" value="INCENP_N"/>
</dbReference>
<dbReference type="InterPro" id="IPR005635">
    <property type="entry name" value="Inner_centromere_prot_ARK-bd"/>
</dbReference>
<dbReference type="PANTHER" id="PTHR13142">
    <property type="entry name" value="INNER CENTROMERE PROTEIN"/>
    <property type="match status" value="1"/>
</dbReference>
<dbReference type="PANTHER" id="PTHR13142:SF1">
    <property type="entry name" value="INNER CENTROMERE PROTEIN"/>
    <property type="match status" value="1"/>
</dbReference>
<dbReference type="Pfam" id="PF03941">
    <property type="entry name" value="INCENP_ARK-bind"/>
    <property type="match status" value="1"/>
</dbReference>
<dbReference type="Pfam" id="PF12178">
    <property type="entry name" value="INCENP_N"/>
    <property type="match status" value="1"/>
</dbReference>